<feature type="chain" id="PRO_1000068746" description="tRNA(Met) cytidine acetate ligase">
    <location>
        <begin position="1"/>
        <end position="424"/>
    </location>
</feature>
<feature type="binding site" evidence="1">
    <location>
        <begin position="7"/>
        <end position="20"/>
    </location>
    <ligand>
        <name>ATP</name>
        <dbReference type="ChEBI" id="CHEBI:30616"/>
    </ligand>
</feature>
<feature type="binding site" evidence="1">
    <location>
        <position position="102"/>
    </location>
    <ligand>
        <name>ATP</name>
        <dbReference type="ChEBI" id="CHEBI:30616"/>
    </ligand>
</feature>
<feature type="binding site" evidence="1">
    <location>
        <position position="174"/>
    </location>
    <ligand>
        <name>ATP</name>
        <dbReference type="ChEBI" id="CHEBI:30616"/>
    </ligand>
</feature>
<feature type="binding site" evidence="1">
    <location>
        <position position="199"/>
    </location>
    <ligand>
        <name>ATP</name>
        <dbReference type="ChEBI" id="CHEBI:30616"/>
    </ligand>
</feature>
<name>TMCAL_ALKMQ</name>
<proteinExistence type="inferred from homology"/>
<comment type="function">
    <text evidence="1">Catalyzes the formation of N(4)-acetylcytidine (ac(4)C) at the wobble position of elongator tRNA(Met), using acetate and ATP as substrates. First activates an acetate ion to form acetyladenylate (Ac-AMP) and then transfers the acetyl group to tRNA to form ac(4)C34.</text>
</comment>
<comment type="catalytic activity">
    <reaction evidence="1">
        <text>cytidine(34) in elongator tRNA(Met) + acetate + ATP = N(4)-acetylcytidine(34) in elongator tRNA(Met) + AMP + diphosphate</text>
        <dbReference type="Rhea" id="RHEA:58144"/>
        <dbReference type="Rhea" id="RHEA-COMP:10693"/>
        <dbReference type="Rhea" id="RHEA-COMP:10694"/>
        <dbReference type="ChEBI" id="CHEBI:30089"/>
        <dbReference type="ChEBI" id="CHEBI:30616"/>
        <dbReference type="ChEBI" id="CHEBI:33019"/>
        <dbReference type="ChEBI" id="CHEBI:74900"/>
        <dbReference type="ChEBI" id="CHEBI:82748"/>
        <dbReference type="ChEBI" id="CHEBI:456215"/>
    </reaction>
</comment>
<comment type="subcellular location">
    <subcellularLocation>
        <location evidence="1">Cytoplasm</location>
    </subcellularLocation>
</comment>
<comment type="similarity">
    <text evidence="1">Belongs to the TmcAL family.</text>
</comment>
<gene>
    <name evidence="1" type="primary">tmcAL</name>
    <name type="ordered locus">Amet_2764</name>
</gene>
<organism>
    <name type="scientific">Alkaliphilus metalliredigens (strain QYMF)</name>
    <dbReference type="NCBI Taxonomy" id="293826"/>
    <lineage>
        <taxon>Bacteria</taxon>
        <taxon>Bacillati</taxon>
        <taxon>Bacillota</taxon>
        <taxon>Clostridia</taxon>
        <taxon>Peptostreptococcales</taxon>
        <taxon>Natronincolaceae</taxon>
        <taxon>Alkaliphilus</taxon>
    </lineage>
</organism>
<accession>A6TRU7</accession>
<protein>
    <recommendedName>
        <fullName evidence="1">tRNA(Met) cytidine acetate ligase</fullName>
        <ecNumber evidence="1">6.3.4.-</ecNumber>
    </recommendedName>
</protein>
<reference key="1">
    <citation type="journal article" date="2016" name="Genome Announc.">
        <title>Complete genome sequence of Alkaliphilus metalliredigens strain QYMF, an alkaliphilic and metal-reducing bacterium isolated from borax-contaminated leachate ponds.</title>
        <authorList>
            <person name="Hwang C."/>
            <person name="Copeland A."/>
            <person name="Lucas S."/>
            <person name="Lapidus A."/>
            <person name="Barry K."/>
            <person name="Detter J.C."/>
            <person name="Glavina Del Rio T."/>
            <person name="Hammon N."/>
            <person name="Israni S."/>
            <person name="Dalin E."/>
            <person name="Tice H."/>
            <person name="Pitluck S."/>
            <person name="Chertkov O."/>
            <person name="Brettin T."/>
            <person name="Bruce D."/>
            <person name="Han C."/>
            <person name="Schmutz J."/>
            <person name="Larimer F."/>
            <person name="Land M.L."/>
            <person name="Hauser L."/>
            <person name="Kyrpides N."/>
            <person name="Mikhailova N."/>
            <person name="Ye Q."/>
            <person name="Zhou J."/>
            <person name="Richardson P."/>
            <person name="Fields M.W."/>
        </authorList>
    </citation>
    <scope>NUCLEOTIDE SEQUENCE [LARGE SCALE GENOMIC DNA]</scope>
    <source>
        <strain>QYMF</strain>
    </source>
</reference>
<sequence>MRILGLITEYNPFHNGHLHHLQESKKISKSTHTVAVMSGHFLQRGEPALIHKWARAQMAVDAGVDLVLELPTLYACASAEFFSHGAVSILNQMGVVDALCFGSELGHIEALKQVATVLINSPESFEISLKKYLQEGIAFPKARSKALIDHFSLEDLSSYGMTTEKMIALLKNPNNILGIEYLKALALTKSKIQPYTITRKAAAYHSTELTLNITSATAIRNHLFNTGNLNEMIHAIPPSTYEILSTCFNKDGGPIFANDLGLTILSMIRRMTPQEIAKILDVGEGLENRIFQCANQSNRLDEFCQCVKSKRYTLTRIQRICMRILLDIQFPLMNQATHASTGLYGRILAFNDRGREIIKLAQKKSSFPFITKINQYTPPNSFTKNLLDLDIRATNLYALAVKNNAFSKGEQDHLTSPYYRKELT</sequence>
<dbReference type="EC" id="6.3.4.-" evidence="1"/>
<dbReference type="EMBL" id="CP000724">
    <property type="protein sequence ID" value="ABR48915.1"/>
    <property type="molecule type" value="Genomic_DNA"/>
</dbReference>
<dbReference type="RefSeq" id="WP_012063887.1">
    <property type="nucleotide sequence ID" value="NC_009633.1"/>
</dbReference>
<dbReference type="SMR" id="A6TRU7"/>
<dbReference type="STRING" id="293826.Amet_2764"/>
<dbReference type="KEGG" id="amt:Amet_2764"/>
<dbReference type="eggNOG" id="COG1323">
    <property type="taxonomic scope" value="Bacteria"/>
</dbReference>
<dbReference type="HOGENOM" id="CLU_038915_0_1_9"/>
<dbReference type="OrthoDB" id="9769796at2"/>
<dbReference type="Proteomes" id="UP000001572">
    <property type="component" value="Chromosome"/>
</dbReference>
<dbReference type="GO" id="GO:0005737">
    <property type="term" value="C:cytoplasm"/>
    <property type="evidence" value="ECO:0007669"/>
    <property type="project" value="UniProtKB-SubCell"/>
</dbReference>
<dbReference type="GO" id="GO:0005524">
    <property type="term" value="F:ATP binding"/>
    <property type="evidence" value="ECO:0007669"/>
    <property type="project" value="UniProtKB-KW"/>
</dbReference>
<dbReference type="GO" id="GO:0016879">
    <property type="term" value="F:ligase activity, forming carbon-nitrogen bonds"/>
    <property type="evidence" value="ECO:0007669"/>
    <property type="project" value="UniProtKB-UniRule"/>
</dbReference>
<dbReference type="GO" id="GO:0000049">
    <property type="term" value="F:tRNA binding"/>
    <property type="evidence" value="ECO:0007669"/>
    <property type="project" value="UniProtKB-KW"/>
</dbReference>
<dbReference type="GO" id="GO:0006400">
    <property type="term" value="P:tRNA modification"/>
    <property type="evidence" value="ECO:0007669"/>
    <property type="project" value="UniProtKB-UniRule"/>
</dbReference>
<dbReference type="Gene3D" id="3.40.50.620">
    <property type="entry name" value="HUPs"/>
    <property type="match status" value="1"/>
</dbReference>
<dbReference type="HAMAP" id="MF_01539">
    <property type="entry name" value="TmcAL"/>
    <property type="match status" value="1"/>
</dbReference>
<dbReference type="InterPro" id="IPR014729">
    <property type="entry name" value="Rossmann-like_a/b/a_fold"/>
</dbReference>
<dbReference type="InterPro" id="IPR008513">
    <property type="entry name" value="tRNA(Met)_cyd_acetate_ligase"/>
</dbReference>
<dbReference type="NCBIfam" id="NF010191">
    <property type="entry name" value="PRK13670.1"/>
    <property type="match status" value="1"/>
</dbReference>
<dbReference type="PANTHER" id="PTHR37825">
    <property type="entry name" value="TRNA(MET) CYTIDINE ACETATE LIGASE"/>
    <property type="match status" value="1"/>
</dbReference>
<dbReference type="PANTHER" id="PTHR37825:SF1">
    <property type="entry name" value="TRNA(MET) CYTIDINE ACETATE LIGASE"/>
    <property type="match status" value="1"/>
</dbReference>
<dbReference type="Pfam" id="PF05636">
    <property type="entry name" value="HIGH_NTase1"/>
    <property type="match status" value="1"/>
</dbReference>
<dbReference type="SUPFAM" id="SSF52374">
    <property type="entry name" value="Nucleotidylyl transferase"/>
    <property type="match status" value="1"/>
</dbReference>
<evidence type="ECO:0000255" key="1">
    <source>
        <dbReference type="HAMAP-Rule" id="MF_01539"/>
    </source>
</evidence>
<keyword id="KW-0067">ATP-binding</keyword>
<keyword id="KW-0963">Cytoplasm</keyword>
<keyword id="KW-0436">Ligase</keyword>
<keyword id="KW-0547">Nucleotide-binding</keyword>
<keyword id="KW-1185">Reference proteome</keyword>
<keyword id="KW-0694">RNA-binding</keyword>
<keyword id="KW-0819">tRNA processing</keyword>
<keyword id="KW-0820">tRNA-binding</keyword>